<gene>
    <name type="primary">BUD32</name>
    <name type="ordered locus">CAALFM_C502440CA</name>
    <name type="ORF">CaO19.11727</name>
    <name type="ORF">CaO19.4252</name>
</gene>
<feature type="chain" id="PRO_0000278908" description="EKC/KEOPS complex subunit BUD32">
    <location>
        <begin position="1"/>
        <end position="296"/>
    </location>
</feature>
<feature type="domain" description="Protein kinase" evidence="3">
    <location>
        <begin position="15"/>
        <end position="296"/>
    </location>
</feature>
<feature type="active site" description="Proton acceptor" evidence="3 4">
    <location>
        <position position="177"/>
    </location>
</feature>
<feature type="binding site" evidence="3">
    <location>
        <begin position="21"/>
        <end position="29"/>
    </location>
    <ligand>
        <name>ATP</name>
        <dbReference type="ChEBI" id="CHEBI:30616"/>
    </ligand>
</feature>
<feature type="binding site" evidence="3">
    <location>
        <position position="61"/>
    </location>
    <ligand>
        <name>ATP</name>
        <dbReference type="ChEBI" id="CHEBI:30616"/>
    </ligand>
</feature>
<keyword id="KW-0010">Activator</keyword>
<keyword id="KW-0067">ATP-binding</keyword>
<keyword id="KW-0158">Chromosome</keyword>
<keyword id="KW-0963">Cytoplasm</keyword>
<keyword id="KW-0378">Hydrolase</keyword>
<keyword id="KW-0418">Kinase</keyword>
<keyword id="KW-0547">Nucleotide-binding</keyword>
<keyword id="KW-0539">Nucleus</keyword>
<keyword id="KW-0597">Phosphoprotein</keyword>
<keyword id="KW-1185">Reference proteome</keyword>
<keyword id="KW-0723">Serine/threonine-protein kinase</keyword>
<keyword id="KW-0779">Telomere</keyword>
<keyword id="KW-0804">Transcription</keyword>
<keyword id="KW-0805">Transcription regulation</keyword>
<keyword id="KW-0808">Transferase</keyword>
<keyword id="KW-0819">tRNA processing</keyword>
<reference key="1">
    <citation type="journal article" date="2004" name="Proc. Natl. Acad. Sci. U.S.A.">
        <title>The diploid genome sequence of Candida albicans.</title>
        <authorList>
            <person name="Jones T."/>
            <person name="Federspiel N.A."/>
            <person name="Chibana H."/>
            <person name="Dungan J."/>
            <person name="Kalman S."/>
            <person name="Magee B.B."/>
            <person name="Newport G."/>
            <person name="Thorstenson Y.R."/>
            <person name="Agabian N."/>
            <person name="Magee P.T."/>
            <person name="Davis R.W."/>
            <person name="Scherer S."/>
        </authorList>
    </citation>
    <scope>NUCLEOTIDE SEQUENCE [LARGE SCALE GENOMIC DNA]</scope>
    <source>
        <strain>SC5314 / ATCC MYA-2876</strain>
    </source>
</reference>
<reference key="2">
    <citation type="journal article" date="2007" name="Genome Biol.">
        <title>Assembly of the Candida albicans genome into sixteen supercontigs aligned on the eight chromosomes.</title>
        <authorList>
            <person name="van het Hoog M."/>
            <person name="Rast T.J."/>
            <person name="Martchenko M."/>
            <person name="Grindle S."/>
            <person name="Dignard D."/>
            <person name="Hogues H."/>
            <person name="Cuomo C."/>
            <person name="Berriman M."/>
            <person name="Scherer S."/>
            <person name="Magee B.B."/>
            <person name="Whiteway M."/>
            <person name="Chibana H."/>
            <person name="Nantel A."/>
            <person name="Magee P.T."/>
        </authorList>
    </citation>
    <scope>GENOME REANNOTATION</scope>
    <source>
        <strain>SC5314 / ATCC MYA-2876</strain>
    </source>
</reference>
<reference key="3">
    <citation type="journal article" date="2013" name="Genome Biol.">
        <title>Assembly of a phased diploid Candida albicans genome facilitates allele-specific measurements and provides a simple model for repeat and indel structure.</title>
        <authorList>
            <person name="Muzzey D."/>
            <person name="Schwartz K."/>
            <person name="Weissman J.S."/>
            <person name="Sherlock G."/>
        </authorList>
    </citation>
    <scope>NUCLEOTIDE SEQUENCE [LARGE SCALE GENOMIC DNA]</scope>
    <scope>GENOME REANNOTATION</scope>
    <source>
        <strain>SC5314 / ATCC MYA-2876</strain>
    </source>
</reference>
<name>BUD32_CANAL</name>
<comment type="function">
    <text evidence="1">Component of the EKC/KEOPS complex that is required for the formation of a threonylcarbamoyl group on adenosine at position 37 (t(6)A37) in tRNAs that read codons beginning with adenine. The complex is probably involved in the transfer of the threonylcarbamoyl moiety of threonylcarbamoyl-AMP (TC-AMP) to the N6 group of A37. BUD32 has ATPase activity in the context of the EKC/KEOPS complex and likely plays a supporting role to the catalytic subunit KAE1. The EKC/KEOPS complex also promotes both telomere uncapping and telomere elongation. The complex is required for efficient recruitment of transcriptional coactivators.</text>
</comment>
<comment type="catalytic activity">
    <reaction evidence="1">
        <text>L-seryl-[protein] + ATP = O-phospho-L-seryl-[protein] + ADP + H(+)</text>
        <dbReference type="Rhea" id="RHEA:17989"/>
        <dbReference type="Rhea" id="RHEA-COMP:9863"/>
        <dbReference type="Rhea" id="RHEA-COMP:11604"/>
        <dbReference type="ChEBI" id="CHEBI:15378"/>
        <dbReference type="ChEBI" id="CHEBI:29999"/>
        <dbReference type="ChEBI" id="CHEBI:30616"/>
        <dbReference type="ChEBI" id="CHEBI:83421"/>
        <dbReference type="ChEBI" id="CHEBI:456216"/>
        <dbReference type="EC" id="2.7.11.1"/>
    </reaction>
</comment>
<comment type="catalytic activity">
    <reaction evidence="1">
        <text>L-threonyl-[protein] + ATP = O-phospho-L-threonyl-[protein] + ADP + H(+)</text>
        <dbReference type="Rhea" id="RHEA:46608"/>
        <dbReference type="Rhea" id="RHEA-COMP:11060"/>
        <dbReference type="Rhea" id="RHEA-COMP:11605"/>
        <dbReference type="ChEBI" id="CHEBI:15378"/>
        <dbReference type="ChEBI" id="CHEBI:30013"/>
        <dbReference type="ChEBI" id="CHEBI:30616"/>
        <dbReference type="ChEBI" id="CHEBI:61977"/>
        <dbReference type="ChEBI" id="CHEBI:456216"/>
        <dbReference type="EC" id="2.7.11.1"/>
    </reaction>
</comment>
<comment type="subunit">
    <text evidence="1">Component of the EKC/KEOPS complex composed of at least BUD32, CGI121, GON7, KAE1 and PCC1; the whole complex dimerizes.</text>
</comment>
<comment type="subcellular location">
    <subcellularLocation>
        <location evidence="1">Cytoplasm</location>
    </subcellularLocation>
    <subcellularLocation>
        <location evidence="1">Nucleus</location>
    </subcellularLocation>
    <subcellularLocation>
        <location evidence="1">Chromosome</location>
        <location evidence="1">Telomere</location>
    </subcellularLocation>
</comment>
<comment type="domain">
    <text evidence="1 2">This protein is considered an atypical serine/threonine kinase, because it lacks the conventional structural elements necessary for the substrate recognition as well as a lysine residue that in all other serine/threonine kinases participates in the catalytic event (By similarity). BUD32 has protein kinase activity in vitro, but in the context of the EKC/KEOPS complex, the catalytic subunit KAE1 switches the activity of BUD32 from kinase into ATPase (By similarity).</text>
</comment>
<comment type="similarity">
    <text evidence="5">Belongs to the protein kinase superfamily. BUD32 family.</text>
</comment>
<sequence length="296" mass="33882">MTDHLIAKVQEHVPNIPLKIISQGAEALVFETSVHPYYNYNSSEKHHESPSLHNHTTFIIKYRPTKPYRHPKIDLQINKSRTIGEVKFMYKLSKLNIACPNIISTDFNNGIIWMECLGSKLPNGTISSFKNWLWYLESQEKEDPSINLHDDDQVELVCQKVGQLIGRLHLNDMIHGDLTSSNIILTEVDTKKNEDTDANNSSVYFEPALIDFGLSSFSGLAEDKAVDLYVLERAILSTHSNYADKLNGWLLEGYQQIHDSIEFNKTKQQLGKSKLKDTIKRLEDVRLRGRKRSMLG</sequence>
<dbReference type="EC" id="3.6.-.-" evidence="2"/>
<dbReference type="EC" id="2.7.11.1" evidence="1"/>
<dbReference type="EMBL" id="CP017627">
    <property type="protein sequence ID" value="AOW29669.1"/>
    <property type="molecule type" value="Genomic_DNA"/>
</dbReference>
<dbReference type="RefSeq" id="XP_720561.1">
    <property type="nucleotide sequence ID" value="XM_715468.1"/>
</dbReference>
<dbReference type="SMR" id="Q5AGC7"/>
<dbReference type="BioGRID" id="1220701">
    <property type="interactions" value="1"/>
</dbReference>
<dbReference type="FunCoup" id="Q5AGC7">
    <property type="interactions" value="913"/>
</dbReference>
<dbReference type="STRING" id="237561.Q5AGC7"/>
<dbReference type="EnsemblFungi" id="C5_02440C_A-T">
    <property type="protein sequence ID" value="C5_02440C_A-T-p1"/>
    <property type="gene ID" value="C5_02440C_A"/>
</dbReference>
<dbReference type="GeneID" id="3637728"/>
<dbReference type="KEGG" id="cal:CAALFM_C502440CA"/>
<dbReference type="CGD" id="CAL0000190041">
    <property type="gene designation" value="BUD32"/>
</dbReference>
<dbReference type="VEuPathDB" id="FungiDB:C5_02440C_A"/>
<dbReference type="eggNOG" id="KOG3087">
    <property type="taxonomic scope" value="Eukaryota"/>
</dbReference>
<dbReference type="HOGENOM" id="CLU_063953_1_1_1"/>
<dbReference type="InParanoid" id="Q5AGC7"/>
<dbReference type="OMA" id="HKLYMEY"/>
<dbReference type="OrthoDB" id="3399at2759"/>
<dbReference type="PRO" id="PR:Q5AGC7"/>
<dbReference type="Proteomes" id="UP000000559">
    <property type="component" value="Chromosome 5"/>
</dbReference>
<dbReference type="GO" id="GO:0000781">
    <property type="term" value="C:chromosome, telomeric region"/>
    <property type="evidence" value="ECO:0007669"/>
    <property type="project" value="UniProtKB-SubCell"/>
</dbReference>
<dbReference type="GO" id="GO:0005829">
    <property type="term" value="C:cytosol"/>
    <property type="evidence" value="ECO:0000318"/>
    <property type="project" value="GO_Central"/>
</dbReference>
<dbReference type="GO" id="GO:0000408">
    <property type="term" value="C:EKC/KEOPS complex"/>
    <property type="evidence" value="ECO:0000318"/>
    <property type="project" value="GO_Central"/>
</dbReference>
<dbReference type="GO" id="GO:0005634">
    <property type="term" value="C:nucleus"/>
    <property type="evidence" value="ECO:0000318"/>
    <property type="project" value="GO_Central"/>
</dbReference>
<dbReference type="GO" id="GO:0005524">
    <property type="term" value="F:ATP binding"/>
    <property type="evidence" value="ECO:0007669"/>
    <property type="project" value="UniProtKB-KW"/>
</dbReference>
<dbReference type="GO" id="GO:0016787">
    <property type="term" value="F:hydrolase activity"/>
    <property type="evidence" value="ECO:0007669"/>
    <property type="project" value="UniProtKB-KW"/>
</dbReference>
<dbReference type="GO" id="GO:0106310">
    <property type="term" value="F:protein serine kinase activity"/>
    <property type="evidence" value="ECO:0007669"/>
    <property type="project" value="RHEA"/>
</dbReference>
<dbReference type="GO" id="GO:0004674">
    <property type="term" value="F:protein serine/threonine kinase activity"/>
    <property type="evidence" value="ECO:0000318"/>
    <property type="project" value="GO_Central"/>
</dbReference>
<dbReference type="GO" id="GO:0044180">
    <property type="term" value="P:filamentous growth of a unicellular organism"/>
    <property type="evidence" value="ECO:0000315"/>
    <property type="project" value="CGD"/>
</dbReference>
<dbReference type="GO" id="GO:0044010">
    <property type="term" value="P:single-species biofilm formation"/>
    <property type="evidence" value="ECO:0000315"/>
    <property type="project" value="CGD"/>
</dbReference>
<dbReference type="GO" id="GO:0008033">
    <property type="term" value="P:tRNA processing"/>
    <property type="evidence" value="ECO:0007669"/>
    <property type="project" value="UniProtKB-KW"/>
</dbReference>
<dbReference type="GO" id="GO:0070525">
    <property type="term" value="P:tRNA threonylcarbamoyladenosine metabolic process"/>
    <property type="evidence" value="ECO:0000318"/>
    <property type="project" value="GO_Central"/>
</dbReference>
<dbReference type="FunFam" id="1.10.510.10:FF:000745">
    <property type="entry name" value="Serine/threonine-protein kinase BUD32"/>
    <property type="match status" value="1"/>
</dbReference>
<dbReference type="FunFam" id="3.30.200.20:FF:000639">
    <property type="entry name" value="Serine/threonine-protein kinase BUD32"/>
    <property type="match status" value="1"/>
</dbReference>
<dbReference type="Gene3D" id="3.30.200.20">
    <property type="entry name" value="Phosphorylase Kinase, domain 1"/>
    <property type="match status" value="1"/>
</dbReference>
<dbReference type="Gene3D" id="1.10.510.10">
    <property type="entry name" value="Transferase(Phosphotransferase) domain 1"/>
    <property type="match status" value="1"/>
</dbReference>
<dbReference type="InterPro" id="IPR011009">
    <property type="entry name" value="Kinase-like_dom_sf"/>
</dbReference>
<dbReference type="InterPro" id="IPR000719">
    <property type="entry name" value="Prot_kinase_dom"/>
</dbReference>
<dbReference type="InterPro" id="IPR008266">
    <property type="entry name" value="Tyr_kinase_AS"/>
</dbReference>
<dbReference type="PANTHER" id="PTHR12209:SF0">
    <property type="entry name" value="EKC_KEOPS COMPLEX SUBUNIT TP53RK"/>
    <property type="match status" value="1"/>
</dbReference>
<dbReference type="PANTHER" id="PTHR12209">
    <property type="entry name" value="NON-SPECIFIC SERINE/THREONINE PROTEIN KINASE"/>
    <property type="match status" value="1"/>
</dbReference>
<dbReference type="SUPFAM" id="SSF56112">
    <property type="entry name" value="Protein kinase-like (PK-like)"/>
    <property type="match status" value="1"/>
</dbReference>
<dbReference type="PROSITE" id="PS50011">
    <property type="entry name" value="PROTEIN_KINASE_DOM"/>
    <property type="match status" value="1"/>
</dbReference>
<dbReference type="PROSITE" id="PS00109">
    <property type="entry name" value="PROTEIN_KINASE_TYR"/>
    <property type="match status" value="1"/>
</dbReference>
<proteinExistence type="inferred from homology"/>
<protein>
    <recommendedName>
        <fullName>EKC/KEOPS complex subunit BUD32</fullName>
        <ecNumber evidence="2">3.6.-.-</ecNumber>
    </recommendedName>
    <alternativeName>
        <fullName>Atypical serine/threonine protein kinase BUD32</fullName>
        <ecNumber evidence="1">2.7.11.1</ecNumber>
    </alternativeName>
</protein>
<evidence type="ECO:0000250" key="1">
    <source>
        <dbReference type="UniProtKB" id="P53323"/>
    </source>
</evidence>
<evidence type="ECO:0000250" key="2">
    <source>
        <dbReference type="UniProtKB" id="Q9UYB9"/>
    </source>
</evidence>
<evidence type="ECO:0000255" key="3">
    <source>
        <dbReference type="PROSITE-ProRule" id="PRU00159"/>
    </source>
</evidence>
<evidence type="ECO:0000255" key="4">
    <source>
        <dbReference type="PROSITE-ProRule" id="PRU10028"/>
    </source>
</evidence>
<evidence type="ECO:0000305" key="5"/>
<accession>Q5AGC7</accession>
<accession>A0A1D8PNF6</accession>
<organism>
    <name type="scientific">Candida albicans (strain SC5314 / ATCC MYA-2876)</name>
    <name type="common">Yeast</name>
    <dbReference type="NCBI Taxonomy" id="237561"/>
    <lineage>
        <taxon>Eukaryota</taxon>
        <taxon>Fungi</taxon>
        <taxon>Dikarya</taxon>
        <taxon>Ascomycota</taxon>
        <taxon>Saccharomycotina</taxon>
        <taxon>Pichiomycetes</taxon>
        <taxon>Debaryomycetaceae</taxon>
        <taxon>Candida/Lodderomyces clade</taxon>
        <taxon>Candida</taxon>
    </lineage>
</organism>